<accession>Q9FWW8</accession>
<accession>Q8L3T3</accession>
<accession>Q8L3U2</accession>
<accession>Q8LGQ1</accession>
<accession>Q8LGQ2</accession>
<protein>
    <recommendedName>
        <fullName>Putative F-box protein At1g12190</fullName>
    </recommendedName>
</protein>
<evidence type="ECO:0000255" key="1">
    <source>
        <dbReference type="PROSITE-ProRule" id="PRU00080"/>
    </source>
</evidence>
<evidence type="ECO:0000269" key="2">
    <source>
    </source>
</evidence>
<name>FB6_ARATH</name>
<gene>
    <name type="ordered locus">At1g12190</name>
    <name type="ORF">T28K15.8</name>
</gene>
<keyword id="KW-1185">Reference proteome</keyword>
<dbReference type="EMBL" id="AC022522">
    <property type="protein sequence ID" value="AAG12575.1"/>
    <property type="molecule type" value="Genomic_DNA"/>
</dbReference>
<dbReference type="EMBL" id="CP002684">
    <property type="protein sequence ID" value="AEE28847.1"/>
    <property type="molecule type" value="Genomic_DNA"/>
</dbReference>
<dbReference type="EMBL" id="AY062364">
    <property type="protein sequence ID" value="AAL65585.1"/>
    <property type="molecule type" value="Genomic_DNA"/>
</dbReference>
<dbReference type="EMBL" id="AY062365">
    <property type="protein sequence ID" value="AAL65586.1"/>
    <property type="molecule type" value="Genomic_DNA"/>
</dbReference>
<dbReference type="EMBL" id="AY062366">
    <property type="protein sequence ID" value="AAL65587.1"/>
    <property type="molecule type" value="Genomic_DNA"/>
</dbReference>
<dbReference type="EMBL" id="AY062367">
    <property type="protein sequence ID" value="AAL65588.1"/>
    <property type="molecule type" value="Genomic_DNA"/>
</dbReference>
<dbReference type="EMBL" id="AY062368">
    <property type="protein sequence ID" value="AAL65589.1"/>
    <property type="molecule type" value="Genomic_DNA"/>
</dbReference>
<dbReference type="EMBL" id="AY062369">
    <property type="protein sequence ID" value="AAL65590.1"/>
    <property type="molecule type" value="Genomic_DNA"/>
</dbReference>
<dbReference type="EMBL" id="AY062370">
    <property type="protein sequence ID" value="AAL65591.1"/>
    <property type="molecule type" value="Genomic_DNA"/>
</dbReference>
<dbReference type="EMBL" id="AY062371">
    <property type="protein sequence ID" value="AAL65592.1"/>
    <property type="molecule type" value="Genomic_DNA"/>
</dbReference>
<dbReference type="EMBL" id="AY062372">
    <property type="protein sequence ID" value="AAL65593.1"/>
    <property type="molecule type" value="Genomic_DNA"/>
</dbReference>
<dbReference type="EMBL" id="AY062373">
    <property type="protein sequence ID" value="AAL65594.1"/>
    <property type="molecule type" value="Genomic_DNA"/>
</dbReference>
<dbReference type="EMBL" id="AY062374">
    <property type="protein sequence ID" value="AAL65595.1"/>
    <property type="molecule type" value="Genomic_DNA"/>
</dbReference>
<dbReference type="EMBL" id="AY062375">
    <property type="protein sequence ID" value="AAL65596.1"/>
    <property type="molecule type" value="Genomic_DNA"/>
</dbReference>
<dbReference type="EMBL" id="AY062376">
    <property type="protein sequence ID" value="AAL65597.1"/>
    <property type="molecule type" value="Genomic_DNA"/>
</dbReference>
<dbReference type="EMBL" id="AY062377">
    <property type="protein sequence ID" value="AAL65598.1"/>
    <property type="molecule type" value="Genomic_DNA"/>
</dbReference>
<dbReference type="EMBL" id="AY062378">
    <property type="protein sequence ID" value="AAL65599.1"/>
    <property type="molecule type" value="Genomic_DNA"/>
</dbReference>
<dbReference type="EMBL" id="AY062379">
    <property type="protein sequence ID" value="AAL65600.1"/>
    <property type="molecule type" value="Genomic_DNA"/>
</dbReference>
<dbReference type="EMBL" id="AY062380">
    <property type="protein sequence ID" value="AAL65601.1"/>
    <property type="molecule type" value="Genomic_DNA"/>
</dbReference>
<dbReference type="EMBL" id="AY062381">
    <property type="protein sequence ID" value="AAL65602.1"/>
    <property type="molecule type" value="Genomic_DNA"/>
</dbReference>
<dbReference type="PIR" id="H86256">
    <property type="entry name" value="H86256"/>
</dbReference>
<dbReference type="RefSeq" id="NP_172683.1">
    <property type="nucleotide sequence ID" value="NM_101091.1"/>
</dbReference>
<dbReference type="PaxDb" id="3702-AT1G12190.1"/>
<dbReference type="EnsemblPlants" id="AT1G12190.1">
    <property type="protein sequence ID" value="AT1G12190.1"/>
    <property type="gene ID" value="AT1G12190"/>
</dbReference>
<dbReference type="GeneID" id="837772"/>
<dbReference type="Gramene" id="AT1G12190.1">
    <property type="protein sequence ID" value="AT1G12190.1"/>
    <property type="gene ID" value="AT1G12190"/>
</dbReference>
<dbReference type="KEGG" id="ath:AT1G12190"/>
<dbReference type="Araport" id="AT1G12190"/>
<dbReference type="TAIR" id="AT1G12190"/>
<dbReference type="HOGENOM" id="CLU_034692_2_1_1"/>
<dbReference type="InParanoid" id="Q9FWW8"/>
<dbReference type="OMA" id="GEEHFRF"/>
<dbReference type="PhylomeDB" id="Q9FWW8"/>
<dbReference type="PRO" id="PR:Q9FWW8"/>
<dbReference type="Proteomes" id="UP000006548">
    <property type="component" value="Chromosome 1"/>
</dbReference>
<dbReference type="ExpressionAtlas" id="Q9FWW8">
    <property type="expression patterns" value="baseline and differential"/>
</dbReference>
<dbReference type="CDD" id="cd22157">
    <property type="entry name" value="F-box_AtFBW1-like"/>
    <property type="match status" value="1"/>
</dbReference>
<dbReference type="InterPro" id="IPR050233">
    <property type="entry name" value="A_thaliana_F-box"/>
</dbReference>
<dbReference type="InterPro" id="IPR006527">
    <property type="entry name" value="F-box-assoc_dom_typ1"/>
</dbReference>
<dbReference type="InterPro" id="IPR017451">
    <property type="entry name" value="F-box-assoc_interact_dom"/>
</dbReference>
<dbReference type="InterPro" id="IPR036047">
    <property type="entry name" value="F-box-like_dom_sf"/>
</dbReference>
<dbReference type="InterPro" id="IPR001810">
    <property type="entry name" value="F-box_dom"/>
</dbReference>
<dbReference type="NCBIfam" id="TIGR01640">
    <property type="entry name" value="F_box_assoc_1"/>
    <property type="match status" value="1"/>
</dbReference>
<dbReference type="PANTHER" id="PTHR47993:SF395">
    <property type="entry name" value="JACALIN-RELATED LECTIN 37-RELATED"/>
    <property type="match status" value="1"/>
</dbReference>
<dbReference type="PANTHER" id="PTHR47993">
    <property type="entry name" value="OS09G0372900 PROTEIN-RELATED"/>
    <property type="match status" value="1"/>
</dbReference>
<dbReference type="Pfam" id="PF00646">
    <property type="entry name" value="F-box"/>
    <property type="match status" value="1"/>
</dbReference>
<dbReference type="Pfam" id="PF07734">
    <property type="entry name" value="FBA_1"/>
    <property type="match status" value="1"/>
</dbReference>
<dbReference type="SMART" id="SM00256">
    <property type="entry name" value="FBOX"/>
    <property type="match status" value="1"/>
</dbReference>
<dbReference type="SUPFAM" id="SSF81383">
    <property type="entry name" value="F-box domain"/>
    <property type="match status" value="1"/>
</dbReference>
<dbReference type="PROSITE" id="PS50181">
    <property type="entry name" value="FBOX"/>
    <property type="match status" value="1"/>
</dbReference>
<proteinExistence type="predicted"/>
<feature type="chain" id="PRO_0000283285" description="Putative F-box protein At1g12190">
    <location>
        <begin position="1"/>
        <end position="375"/>
    </location>
</feature>
<feature type="domain" description="F-box" evidence="1">
    <location>
        <begin position="1"/>
        <end position="46"/>
    </location>
</feature>
<feature type="sequence variant" description="In strain: cv. Zu-0." evidence="2">
    <original>F</original>
    <variation>L</variation>
    <location>
        <position position="266"/>
    </location>
</feature>
<feature type="sequence variant" description="In strain: cv. Bur-0 and cv. Wu-0." evidence="2">
    <original>A</original>
    <variation>D</variation>
    <location>
        <position position="287"/>
    </location>
</feature>
<feature type="sequence variant" description="In strain: cv. Bur-0 and cv. Wu-0." evidence="2">
    <original>N</original>
    <variation>I</variation>
    <location>
        <position position="326"/>
    </location>
</feature>
<feature type="sequence variant" description="In strain: cv. Bur-0 and cv. Wu-0." evidence="2">
    <original>I</original>
    <variation>T</variation>
    <location>
        <position position="361"/>
    </location>
</feature>
<feature type="sequence variant" description="In strain: cv. Mt-0." evidence="2">
    <original>E</original>
    <variation>K</variation>
    <location>
        <position position="366"/>
    </location>
</feature>
<feature type="sequence variant" description="In strain: cv. Bur-0 and cv. Wu-0." evidence="2">
    <original>KI</original>
    <variation>ET</variation>
    <location>
        <begin position="371"/>
        <end position="372"/>
    </location>
</feature>
<reference key="1">
    <citation type="journal article" date="2000" name="Nature">
        <title>Sequence and analysis of chromosome 1 of the plant Arabidopsis thaliana.</title>
        <authorList>
            <person name="Theologis A."/>
            <person name="Ecker J.R."/>
            <person name="Palm C.J."/>
            <person name="Federspiel N.A."/>
            <person name="Kaul S."/>
            <person name="White O."/>
            <person name="Alonso J."/>
            <person name="Altafi H."/>
            <person name="Araujo R."/>
            <person name="Bowman C.L."/>
            <person name="Brooks S.Y."/>
            <person name="Buehler E."/>
            <person name="Chan A."/>
            <person name="Chao Q."/>
            <person name="Chen H."/>
            <person name="Cheuk R.F."/>
            <person name="Chin C.W."/>
            <person name="Chung M.K."/>
            <person name="Conn L."/>
            <person name="Conway A.B."/>
            <person name="Conway A.R."/>
            <person name="Creasy T.H."/>
            <person name="Dewar K."/>
            <person name="Dunn P."/>
            <person name="Etgu P."/>
            <person name="Feldblyum T.V."/>
            <person name="Feng J.-D."/>
            <person name="Fong B."/>
            <person name="Fujii C.Y."/>
            <person name="Gill J.E."/>
            <person name="Goldsmith A.D."/>
            <person name="Haas B."/>
            <person name="Hansen N.F."/>
            <person name="Hughes B."/>
            <person name="Huizar L."/>
            <person name="Hunter J.L."/>
            <person name="Jenkins J."/>
            <person name="Johnson-Hopson C."/>
            <person name="Khan S."/>
            <person name="Khaykin E."/>
            <person name="Kim C.J."/>
            <person name="Koo H.L."/>
            <person name="Kremenetskaia I."/>
            <person name="Kurtz D.B."/>
            <person name="Kwan A."/>
            <person name="Lam B."/>
            <person name="Langin-Hooper S."/>
            <person name="Lee A."/>
            <person name="Lee J.M."/>
            <person name="Lenz C.A."/>
            <person name="Li J.H."/>
            <person name="Li Y.-P."/>
            <person name="Lin X."/>
            <person name="Liu S.X."/>
            <person name="Liu Z.A."/>
            <person name="Luros J.S."/>
            <person name="Maiti R."/>
            <person name="Marziali A."/>
            <person name="Militscher J."/>
            <person name="Miranda M."/>
            <person name="Nguyen M."/>
            <person name="Nierman W.C."/>
            <person name="Osborne B.I."/>
            <person name="Pai G."/>
            <person name="Peterson J."/>
            <person name="Pham P.K."/>
            <person name="Rizzo M."/>
            <person name="Rooney T."/>
            <person name="Rowley D."/>
            <person name="Sakano H."/>
            <person name="Salzberg S.L."/>
            <person name="Schwartz J.R."/>
            <person name="Shinn P."/>
            <person name="Southwick A.M."/>
            <person name="Sun H."/>
            <person name="Tallon L.J."/>
            <person name="Tambunga G."/>
            <person name="Toriumi M.J."/>
            <person name="Town C.D."/>
            <person name="Utterback T."/>
            <person name="Van Aken S."/>
            <person name="Vaysberg M."/>
            <person name="Vysotskaia V.S."/>
            <person name="Walker M."/>
            <person name="Wu D."/>
            <person name="Yu G."/>
            <person name="Fraser C.M."/>
            <person name="Venter J.C."/>
            <person name="Davis R.W."/>
        </authorList>
    </citation>
    <scope>NUCLEOTIDE SEQUENCE [LARGE SCALE GENOMIC DNA]</scope>
    <source>
        <strain>cv. Columbia</strain>
    </source>
</reference>
<reference key="2">
    <citation type="journal article" date="2017" name="Plant J.">
        <title>Araport11: a complete reannotation of the Arabidopsis thaliana reference genome.</title>
        <authorList>
            <person name="Cheng C.Y."/>
            <person name="Krishnakumar V."/>
            <person name="Chan A.P."/>
            <person name="Thibaud-Nissen F."/>
            <person name="Schobel S."/>
            <person name="Town C.D."/>
        </authorList>
    </citation>
    <scope>GENOME REANNOTATION</scope>
    <source>
        <strain>cv. Columbia</strain>
    </source>
</reference>
<reference key="3">
    <citation type="journal article" date="2002" name="Proc. Natl. Acad. Sci. U.S.A.">
        <title>Signature of balancing selection in Arabidopsis.</title>
        <authorList>
            <person name="Tian D."/>
            <person name="Araki H."/>
            <person name="Stahl E."/>
            <person name="Bergelson J."/>
            <person name="Kreitman M."/>
        </authorList>
    </citation>
    <scope>NUCLEOTIDE SEQUENCE [GENOMIC DNA] OF 210-375</scope>
    <scope>VARIANTS LEU-266; ASP-287; ILE-326; THR-361; LYS-366 AND 371-LYS-ILE-372 DELINS GLU-THR</scope>
    <source>
        <strain>cv. Ab-27</strain>
        <strain>cv. Ang-0</strain>
        <strain>cv. Bla-2</strain>
        <strain>cv. Bur-0</strain>
        <strain>cv. Columbia</strain>
        <strain>cv. Ct-1</strain>
        <strain>cv. Cvi-0</strain>
        <strain>cv. Fm-15</strain>
        <strain>cv. Hs-12</strain>
        <strain>cv. Kas-1</strain>
        <strain>cv. KZ-13</strain>
        <strain>cv. Landsberg erecta</strain>
        <strain>cv. Lip-0</strain>
        <strain>cv. Mt-0</strain>
        <strain>cv. NFC-5</strain>
        <strain>cv. Pog-0</strain>
        <strain>cv. Rf-4</strain>
        <strain>cv. Tamm-07</strain>
        <strain>cv. Tsu-0</strain>
        <strain>cv. Up-14</strain>
        <strain>cv. Wu-0</strain>
        <strain>cv. Zu-0</strain>
    </source>
</reference>
<organism>
    <name type="scientific">Arabidopsis thaliana</name>
    <name type="common">Mouse-ear cress</name>
    <dbReference type="NCBI Taxonomy" id="3702"/>
    <lineage>
        <taxon>Eukaryota</taxon>
        <taxon>Viridiplantae</taxon>
        <taxon>Streptophyta</taxon>
        <taxon>Embryophyta</taxon>
        <taxon>Tracheophyta</taxon>
        <taxon>Spermatophyta</taxon>
        <taxon>Magnoliopsida</taxon>
        <taxon>eudicotyledons</taxon>
        <taxon>Gunneridae</taxon>
        <taxon>Pentapetalae</taxon>
        <taxon>rosids</taxon>
        <taxon>malvids</taxon>
        <taxon>Brassicales</taxon>
        <taxon>Brassicaceae</taxon>
        <taxon>Camelineae</taxon>
        <taxon>Arabidopsis</taxon>
    </lineage>
</organism>
<sequence length="375" mass="43357">MACVKFPWELMEEILYRVPSLSLSRFKTVSKEWNTLLNDKTFIKKHLALVRPQFRLWTNSKVYSVDVSLNDDPNIELRELPLDIPYVIDHRTTNFLPCNDLLFCASWWSNKAVVWNPSLRQTRLIKSGEEHFRFGGIGYDSGRPGKGYHIFGHSHSRLSVNGNTSKFIKRFYITKFESNAWKCIDDVSLGENSIGGDSLDNNNVSLNGNLYWTTNSYDTDEYLIQSFDFSKEIFKIFCVLPRKKDSSDIPVLSVFRGDRLSVLHKFKGTNNMEIWVTKNKINESVKAVVWMMFMTVSIPIYKDSKPSYFINDIYEKRLVMCCSDENGKACVYIVKDQARKKIQLGFHVSEFSHCFYDPSLIPIPSETSGQKISNS</sequence>